<sequence length="95" mass="10634">MTKSELIEKLATRQSQLSAKEVEGAIKEMLEQMATTLESGDRIEIRGFGSFSLHYRAPRTGRNPKTGSSVDLEGKYVPHFKPGKELRERVDAVNV</sequence>
<gene>
    <name evidence="1" type="primary">ihfB</name>
    <name evidence="1" type="synonym">himD</name>
    <name type="ordered locus">Sbal195_2395</name>
</gene>
<keyword id="KW-0233">DNA recombination</keyword>
<keyword id="KW-0238">DNA-binding</keyword>
<keyword id="KW-0804">Transcription</keyword>
<keyword id="KW-0805">Transcription regulation</keyword>
<keyword id="KW-0810">Translation regulation</keyword>
<name>IHFB_SHEB9</name>
<feature type="chain" id="PRO_1000080051" description="Integration host factor subunit beta">
    <location>
        <begin position="1"/>
        <end position="95"/>
    </location>
</feature>
<feature type="region of interest" description="Disordered" evidence="2">
    <location>
        <begin position="56"/>
        <end position="76"/>
    </location>
</feature>
<accession>A9L2X4</accession>
<protein>
    <recommendedName>
        <fullName evidence="1">Integration host factor subunit beta</fullName>
        <shortName evidence="1">IHF-beta</shortName>
    </recommendedName>
</protein>
<proteinExistence type="inferred from homology"/>
<dbReference type="EMBL" id="CP000891">
    <property type="protein sequence ID" value="ABX49563.1"/>
    <property type="molecule type" value="Genomic_DNA"/>
</dbReference>
<dbReference type="RefSeq" id="WP_006081718.1">
    <property type="nucleotide sequence ID" value="NC_009997.1"/>
</dbReference>
<dbReference type="SMR" id="A9L2X4"/>
<dbReference type="GeneID" id="11772512"/>
<dbReference type="KEGG" id="sbn:Sbal195_2395"/>
<dbReference type="HOGENOM" id="CLU_105066_2_0_6"/>
<dbReference type="Proteomes" id="UP000000770">
    <property type="component" value="Chromosome"/>
</dbReference>
<dbReference type="GO" id="GO:0005694">
    <property type="term" value="C:chromosome"/>
    <property type="evidence" value="ECO:0007669"/>
    <property type="project" value="InterPro"/>
</dbReference>
<dbReference type="GO" id="GO:0005829">
    <property type="term" value="C:cytosol"/>
    <property type="evidence" value="ECO:0007669"/>
    <property type="project" value="TreeGrafter"/>
</dbReference>
<dbReference type="GO" id="GO:0003677">
    <property type="term" value="F:DNA binding"/>
    <property type="evidence" value="ECO:0007669"/>
    <property type="project" value="UniProtKB-UniRule"/>
</dbReference>
<dbReference type="GO" id="GO:0030527">
    <property type="term" value="F:structural constituent of chromatin"/>
    <property type="evidence" value="ECO:0007669"/>
    <property type="project" value="InterPro"/>
</dbReference>
<dbReference type="GO" id="GO:0006310">
    <property type="term" value="P:DNA recombination"/>
    <property type="evidence" value="ECO:0007669"/>
    <property type="project" value="UniProtKB-UniRule"/>
</dbReference>
<dbReference type="GO" id="GO:0006355">
    <property type="term" value="P:regulation of DNA-templated transcription"/>
    <property type="evidence" value="ECO:0007669"/>
    <property type="project" value="UniProtKB-UniRule"/>
</dbReference>
<dbReference type="GO" id="GO:0006417">
    <property type="term" value="P:regulation of translation"/>
    <property type="evidence" value="ECO:0007669"/>
    <property type="project" value="UniProtKB-UniRule"/>
</dbReference>
<dbReference type="CDD" id="cd13836">
    <property type="entry name" value="IHF_B"/>
    <property type="match status" value="1"/>
</dbReference>
<dbReference type="FunFam" id="4.10.520.10:FF:000003">
    <property type="entry name" value="Integration host factor subunit beta"/>
    <property type="match status" value="1"/>
</dbReference>
<dbReference type="Gene3D" id="4.10.520.10">
    <property type="entry name" value="IHF-like DNA-binding proteins"/>
    <property type="match status" value="1"/>
</dbReference>
<dbReference type="HAMAP" id="MF_00381">
    <property type="entry name" value="IHF_beta"/>
    <property type="match status" value="1"/>
</dbReference>
<dbReference type="InterPro" id="IPR000119">
    <property type="entry name" value="Hist_DNA-bd"/>
</dbReference>
<dbReference type="InterPro" id="IPR020816">
    <property type="entry name" value="Histone-like_DNA-bd_CS"/>
</dbReference>
<dbReference type="InterPro" id="IPR010992">
    <property type="entry name" value="IHF-like_DNA-bd_dom_sf"/>
</dbReference>
<dbReference type="InterPro" id="IPR005685">
    <property type="entry name" value="IHF_beta"/>
</dbReference>
<dbReference type="NCBIfam" id="TIGR00988">
    <property type="entry name" value="hip"/>
    <property type="match status" value="1"/>
</dbReference>
<dbReference type="NCBIfam" id="NF001222">
    <property type="entry name" value="PRK00199.1"/>
    <property type="match status" value="1"/>
</dbReference>
<dbReference type="PANTHER" id="PTHR33175">
    <property type="entry name" value="DNA-BINDING PROTEIN HU"/>
    <property type="match status" value="1"/>
</dbReference>
<dbReference type="PANTHER" id="PTHR33175:SF5">
    <property type="entry name" value="INTEGRATION HOST FACTOR SUBUNIT BETA"/>
    <property type="match status" value="1"/>
</dbReference>
<dbReference type="Pfam" id="PF00216">
    <property type="entry name" value="Bac_DNA_binding"/>
    <property type="match status" value="1"/>
</dbReference>
<dbReference type="PRINTS" id="PR01727">
    <property type="entry name" value="DNABINDINGHU"/>
</dbReference>
<dbReference type="SMART" id="SM00411">
    <property type="entry name" value="BHL"/>
    <property type="match status" value="1"/>
</dbReference>
<dbReference type="SUPFAM" id="SSF47729">
    <property type="entry name" value="IHF-like DNA-binding proteins"/>
    <property type="match status" value="1"/>
</dbReference>
<dbReference type="PROSITE" id="PS00045">
    <property type="entry name" value="HISTONE_LIKE"/>
    <property type="match status" value="1"/>
</dbReference>
<evidence type="ECO:0000255" key="1">
    <source>
        <dbReference type="HAMAP-Rule" id="MF_00381"/>
    </source>
</evidence>
<evidence type="ECO:0000256" key="2">
    <source>
        <dbReference type="SAM" id="MobiDB-lite"/>
    </source>
</evidence>
<reference key="1">
    <citation type="submission" date="2007-11" db="EMBL/GenBank/DDBJ databases">
        <title>Complete sequence of chromosome of Shewanella baltica OS195.</title>
        <authorList>
            <consortium name="US DOE Joint Genome Institute"/>
            <person name="Copeland A."/>
            <person name="Lucas S."/>
            <person name="Lapidus A."/>
            <person name="Barry K."/>
            <person name="Glavina del Rio T."/>
            <person name="Dalin E."/>
            <person name="Tice H."/>
            <person name="Pitluck S."/>
            <person name="Chain P."/>
            <person name="Malfatti S."/>
            <person name="Shin M."/>
            <person name="Vergez L."/>
            <person name="Schmutz J."/>
            <person name="Larimer F."/>
            <person name="Land M."/>
            <person name="Hauser L."/>
            <person name="Kyrpides N."/>
            <person name="Kim E."/>
            <person name="Brettar I."/>
            <person name="Rodrigues J."/>
            <person name="Konstantinidis K."/>
            <person name="Klappenbach J."/>
            <person name="Hofle M."/>
            <person name="Tiedje J."/>
            <person name="Richardson P."/>
        </authorList>
    </citation>
    <scope>NUCLEOTIDE SEQUENCE [LARGE SCALE GENOMIC DNA]</scope>
    <source>
        <strain>OS195</strain>
    </source>
</reference>
<organism>
    <name type="scientific">Shewanella baltica (strain OS195)</name>
    <dbReference type="NCBI Taxonomy" id="399599"/>
    <lineage>
        <taxon>Bacteria</taxon>
        <taxon>Pseudomonadati</taxon>
        <taxon>Pseudomonadota</taxon>
        <taxon>Gammaproteobacteria</taxon>
        <taxon>Alteromonadales</taxon>
        <taxon>Shewanellaceae</taxon>
        <taxon>Shewanella</taxon>
    </lineage>
</organism>
<comment type="function">
    <text evidence="1">This protein is one of the two subunits of integration host factor, a specific DNA-binding protein that functions in genetic recombination as well as in transcriptional and translational control.</text>
</comment>
<comment type="subunit">
    <text evidence="1">Heterodimer of an alpha and a beta chain.</text>
</comment>
<comment type="similarity">
    <text evidence="1">Belongs to the bacterial histone-like protein family.</text>
</comment>